<sequence>MYRDPEAASPGAPTRDVLLVSAIITVSLSVTIVLCGLCHWCQRKLGKRYKNSLETVGTPDSGRGRGEKKAIKLPAGGKAVNTAPVPGQTPHDESDRRTETRSSVSDLVNSLTSEMLMLSPGSEEDEAHEGCSRENLGRIQFSVGYNFQESTLTVKVMKAQELPAKDFSGTSDPFVKIYLLPDKKHKLETKVKRKNLNPHWNETFLFEGFPYEKVVQRVLYLQVLDYDRFSRNDPIGEVSIPLNKVDLTQMQTFWKDLKPCSDGSGSRGELLLSLCYNPSANSIIVNIIKARNLKAMDIGGTSDPYVKVWLMYKDKRVEKKKTVTKKRNLNPIFNESFAFDIPTEKLRETTIIITVMDKDKLSRNDVIGKIYLSWKSGPGEVKHWKDMIARPRQPVAQWHQLKA</sequence>
<accession>Q9R0N7</accession>
<accession>A4QPF1</accession>
<accession>E9PZA8</accession>
<accession>Q0D2K7</accession>
<accession>Q8CF95</accession>
<accession>Q8CF96</accession>
<proteinExistence type="evidence at protein level"/>
<gene>
    <name evidence="25" type="primary">Syt7</name>
</gene>
<name>SYT7_MOUSE</name>
<comment type="function">
    <text evidence="2 10 11 12 13 15 16 17 18 19">Ca(2+) sensor involved in Ca(2+)-dependent exocytosis of secretory and synaptic vesicles through Ca(2+) and phospholipid binding to the C2 domain. Ca(2+) induces binding of the C2-domains to phospholipid membranes and to assembled SNARE-complexes; both actions contribute to triggering exocytosis. SYT7 binds Ca(2+) with high affinity and slow kinetics compared to other synaptotagmins (PubMed:26738595). Involved in Ca(2+)-triggered lysosomal exocytosis, a major component of the plasma membrane repair (By similarity). Ca(2+)-regulated delivery of lysosomal membranes to the cell surface is also involved in the phagocytic uptake of particles by macrophages (PubMed:16982801, PubMed:21041449). Ca(2+)-triggered lysosomal exocytosis also plays a role in bone remodeling by regulating secretory pathways in osteoclasts and osteoblasts (PubMed:18539119). Involved in cholesterol transport from lysosome to peroxisome by promoting membrane contacts between lysosomes and peroxisomes: probably acts by promoting vesicle fusion by binding phosphatidylinositol-4,5-bisphosphate on peroxisomal membranes (PubMed:25860611). Acts as a key mediator of synaptic facilitation, a process also named short-term synaptic potentiation: synaptic facilitation takes place at synapses with a low initial release probability and is caused by influx of Ca(2+) into the axon terminal after spike generation, increasing the release probability of neurotransmitters (PubMed:24569478, PubMed:26738595). Probably mediates synaptic facilitation by directly increasing the probability of release (PubMed:26738595). May also contribute to synaptic facilitation by regulating synaptic vesicle replenishment, a process required to ensure that synaptic vesicles are ready for the arrival of the next action potential: SYT7 is required for synaptic vesicle replenishment by acting as a sensor for Ca(2+) and by forming a complex with calmodulin (PubMed:24569478). Also acts as a regulator of Ca(2+)-dependent insulin and glucagon secretion in beta-cells (PubMed:18308938, PubMed:19171650). Triggers exocytosis by promoting fusion pore opening and fusion pore expansion in chromaffin cells (PubMed:20956309). Also regulates the secretion of some non-synaptic secretory granules of specialized cells (By similarity).</text>
</comment>
<comment type="cofactor">
    <cofactor evidence="4 14">
        <name>Ca(2+)</name>
        <dbReference type="ChEBI" id="CHEBI:29108"/>
    </cofactor>
    <text evidence="4 14">Binds 3 Ca(2+) ions per C2 domain.</text>
</comment>
<comment type="subunit">
    <text evidence="6 16 17 20">Homodimer (PubMed:10871604). Can also form heterodimers with SYT6, SYT9 and SYT10 (PubMed:10871604). Interacts with calmodulin (CALM1, CALM2 or CALM3) (PubMed:24569478). Interacts with CD63; required for localization to lysosomes (PubMed:21041449). Interacts with APP (PubMed:30429473).</text>
</comment>
<comment type="subcellular location">
    <subcellularLocation>
        <location evidence="2">Cell membrane</location>
        <topology evidence="3">Single-pass membrane protein</topology>
    </subcellularLocation>
    <subcellularLocation>
        <location evidence="7">Presynaptic cell membrane</location>
        <topology evidence="3">Single-pass membrane protein</topology>
    </subcellularLocation>
    <subcellularLocation>
        <location evidence="17">Cytoplasmic vesicle</location>
        <location evidence="17">Secretory vesicle</location>
        <location evidence="17">Synaptic vesicle membrane</location>
        <topology evidence="3">Single-pass membrane protein</topology>
    </subcellularLocation>
    <subcellularLocation>
        <location evidence="16 18">Lysosome membrane</location>
        <topology evidence="3">Single-pass membrane protein</topology>
    </subcellularLocation>
    <subcellularLocation>
        <location evidence="10">Cytoplasmic vesicle</location>
        <location evidence="10">Phagosome membrane</location>
        <topology evidence="3">Single-pass membrane protein</topology>
    </subcellularLocation>
    <subcellularLocation>
        <location evidence="18">Peroxisome membrane</location>
        <topology evidence="3">Single-pass membrane protein</topology>
    </subcellularLocation>
    <subcellularLocation>
        <location evidence="2">Cytoplasmic vesicle</location>
        <location evidence="2">Secretory vesicle membrane</location>
        <topology evidence="3">Single-pass membrane protein</topology>
    </subcellularLocation>
    <text evidence="16">Localization to lysosomes is dependent on N-terminal palmitoylation and interaction with CD63.</text>
</comment>
<comment type="alternative products">
    <event type="alternative splicing"/>
    <isoform>
        <id>Q9R0N7-1</id>
        <name>1</name>
        <name evidence="22">Synaptotagmin VIIalpha</name>
        <name evidence="23">Syt7alpha</name>
        <sequence type="displayed"/>
    </isoform>
    <isoform>
        <id>Q9R0N7-2</id>
        <name>2</name>
        <name evidence="22">Synaptotagmin VIIgamma</name>
        <name evidence="23">Syt7gamma</name>
        <sequence type="described" ref="VSP_058236"/>
    </isoform>
    <isoform>
        <id>Q9R0N7-3</id>
        <name>3</name>
        <name evidence="22">Synaptotagmin VIIbeta</name>
        <name evidence="23">Syt7beta</name>
        <sequence type="described" ref="VSP_058235"/>
    </isoform>
    <isoform>
        <id>Q9R0N7-4</id>
        <name>4</name>
        <sequence type="described" ref="VSP_058237"/>
    </isoform>
</comment>
<comment type="tissue specificity">
    <text evidence="11 13">Widely expressed. Expressed in insulin-secreting cells (PubMed:18308938). Present in glucagon-secreting cells (at protein level) (PubMed:19171650).</text>
</comment>
<comment type="domain">
    <text evidence="1">The C2 domains bind Ca(2+) and membranes. Binding to membranes involves Ca(2+)-dependent phospholipid binding. Compared to other members of the family, the C2 domains of SYT7 dock and insert into cellular membranes in response to intracellular Ca(2+) concentrations that are lower than those required for other synaptotagmins. The two C2 domains bind independently to planar membranes, without interdomain cooperativity. Moreover, SYT7 C2 domains insert more deeply into membranes compared to other synaptotagmins.</text>
</comment>
<comment type="PTM">
    <text evidence="16">Palmitoylated at its vesicular N-terminus; palmitoylation is required for localization to lysosome and phagocytosis in macrophages.</text>
</comment>
<comment type="disruption phenotype">
    <text evidence="9 11 13 17 19">No visible phenotype. Mice were born at the expected Mendelian ratio and do not show gross abnormalities and/or obvious neurological defects. Mice have a normal life span and are fertile, although reproductive capacity is declining faster with age (PubMed:12925704). Embryonic fibroblasts from Syt7 deficient mice are less susceptible to Trypanosoma cruzi invasion, and display impaired lysosomal exocytosis and resealing after wounding (PubMed:12925704). Mutant mice display impaired insulin secretion: they exhibit normal insulin sensitivity and normal metabolic and Ca(2+) responses but impaired insulin release, due to Ca(2+)-sensing defects (PubMed:18308938). Impaired glucagon secretion (PubMed:19171650). Neurons show enhanced synaptic depression: spontaneous synaptic vesicle release is unaffected, while replenishment is impaired (PubMed:24569478). Abolished synaptic facilitation at all synapses except for mossy fiber synapses, where the remaining enhancement is consistent with use-dependent spike broadening that occurs at this synapse (PubMed:26738595). The loss of facilitation is not due to slowed recovery from depression. The initial probability of release and the presynaptic residual Ca(2+) signals are not affected (PubMed:26738595).</text>
</comment>
<comment type="miscellaneous">
    <molecule>Isoform 1</molecule>
    <text evidence="8">Major isoform.</text>
</comment>
<comment type="similarity">
    <text evidence="23">Belongs to the synaptotagmin family.</text>
</comment>
<keyword id="KW-0002">3D-structure</keyword>
<keyword id="KW-0025">Alternative splicing</keyword>
<keyword id="KW-0106">Calcium</keyword>
<keyword id="KW-0112">Calmodulin-binding</keyword>
<keyword id="KW-1003">Cell membrane</keyword>
<keyword id="KW-0966">Cell projection</keyword>
<keyword id="KW-0968">Cytoplasmic vesicle</keyword>
<keyword id="KW-0268">Exocytosis</keyword>
<keyword id="KW-0449">Lipoprotein</keyword>
<keyword id="KW-0458">Lysosome</keyword>
<keyword id="KW-0472">Membrane</keyword>
<keyword id="KW-0479">Metal-binding</keyword>
<keyword id="KW-0488">Methylation</keyword>
<keyword id="KW-0564">Palmitate</keyword>
<keyword id="KW-0576">Peroxisome</keyword>
<keyword id="KW-0597">Phosphoprotein</keyword>
<keyword id="KW-1185">Reference proteome</keyword>
<keyword id="KW-0677">Repeat</keyword>
<keyword id="KW-0770">Synapse</keyword>
<keyword id="KW-0812">Transmembrane</keyword>
<keyword id="KW-1133">Transmembrane helix</keyword>
<dbReference type="EMBL" id="AB026804">
    <property type="protein sequence ID" value="BAA85776.1"/>
    <property type="molecule type" value="mRNA"/>
</dbReference>
<dbReference type="EMBL" id="AB075900">
    <property type="protein sequence ID" value="BAC44832.1"/>
    <property type="molecule type" value="mRNA"/>
</dbReference>
<dbReference type="EMBL" id="AB075901">
    <property type="protein sequence ID" value="BAC44833.1"/>
    <property type="molecule type" value="mRNA"/>
</dbReference>
<dbReference type="EMBL" id="AC124169">
    <property type="status" value="NOT_ANNOTATED_CDS"/>
    <property type="molecule type" value="Genomic_DNA"/>
</dbReference>
<dbReference type="EMBL" id="BC105660">
    <property type="protein sequence ID" value="AAI05661.1"/>
    <property type="molecule type" value="mRNA"/>
</dbReference>
<dbReference type="EMBL" id="BC139806">
    <property type="protein sequence ID" value="AAI39807.1"/>
    <property type="molecule type" value="mRNA"/>
</dbReference>
<dbReference type="CCDS" id="CCDS29575.1">
    <molecule id="Q9R0N7-1"/>
</dbReference>
<dbReference type="CCDS" id="CCDS29576.1">
    <molecule id="Q9R0N7-3"/>
</dbReference>
<dbReference type="CCDS" id="CCDS50388.1">
    <molecule id="Q9R0N7-4"/>
</dbReference>
<dbReference type="RefSeq" id="NP_061271.1">
    <molecule id="Q9R0N7-1"/>
    <property type="nucleotide sequence ID" value="NM_018801.3"/>
</dbReference>
<dbReference type="RefSeq" id="NP_775090.1">
    <molecule id="Q9R0N7-3"/>
    <property type="nucleotide sequence ID" value="NM_173067.3"/>
</dbReference>
<dbReference type="RefSeq" id="NP_775091.2">
    <molecule id="Q9R0N7-4"/>
    <property type="nucleotide sequence ID" value="NM_173068.2"/>
</dbReference>
<dbReference type="PDB" id="3N5A">
    <property type="method" value="X-ray"/>
    <property type="resolution" value="1.44 A"/>
    <property type="chains" value="A=266-403"/>
</dbReference>
<dbReference type="PDB" id="6LCY">
    <property type="method" value="X-ray"/>
    <property type="resolution" value="2.30 A"/>
    <property type="chains" value="A=263-403"/>
</dbReference>
<dbReference type="PDBsum" id="3N5A"/>
<dbReference type="PDBsum" id="6LCY"/>
<dbReference type="SMR" id="Q9R0N7"/>
<dbReference type="BioGRID" id="207673">
    <property type="interactions" value="5"/>
</dbReference>
<dbReference type="FunCoup" id="Q9R0N7">
    <property type="interactions" value="435"/>
</dbReference>
<dbReference type="GlyGen" id="Q9R0N7">
    <property type="glycosylation" value="1 site, 1 O-linked glycan (1 site)"/>
</dbReference>
<dbReference type="iPTMnet" id="Q9R0N7"/>
<dbReference type="PhosphoSitePlus" id="Q9R0N7"/>
<dbReference type="SwissPalm" id="Q9R0N7"/>
<dbReference type="ProteomicsDB" id="254620">
    <molecule id="Q9R0N7-1"/>
</dbReference>
<dbReference type="ProteomicsDB" id="254621">
    <molecule id="Q9R0N7-2"/>
</dbReference>
<dbReference type="ProteomicsDB" id="254622">
    <molecule id="Q9R0N7-3"/>
</dbReference>
<dbReference type="ProteomicsDB" id="254623">
    <molecule id="Q9R0N7-4"/>
</dbReference>
<dbReference type="ABCD" id="Q9R0N7">
    <property type="antibodies" value="1 sequenced antibody"/>
</dbReference>
<dbReference type="Antibodypedia" id="2220">
    <property type="antibodies" value="257 antibodies from 33 providers"/>
</dbReference>
<dbReference type="Ensembl" id="ENSMUST00000073899.6">
    <molecule id="Q9R0N7-1"/>
    <property type="protein sequence ID" value="ENSMUSP00000073560.5"/>
    <property type="gene ID" value="ENSMUSG00000024743.17"/>
</dbReference>
<dbReference type="Ensembl" id="ENSMUST00000223586.2">
    <molecule id="Q9R0N7-3"/>
    <property type="protein sequence ID" value="ENSMUSP00000153482.2"/>
    <property type="gene ID" value="ENSMUSG00000024743.17"/>
</dbReference>
<dbReference type="Ensembl" id="ENSMUST00000224135.3">
    <molecule id="Q9R0N7-4"/>
    <property type="protein sequence ID" value="ENSMUSP00000153132.3"/>
    <property type="gene ID" value="ENSMUSG00000024743.17"/>
</dbReference>
<dbReference type="GeneID" id="54525"/>
<dbReference type="KEGG" id="mmu:54525"/>
<dbReference type="UCSC" id="uc008gpp.2">
    <property type="organism name" value="mouse"/>
</dbReference>
<dbReference type="UCSC" id="uc008gpq.2">
    <molecule id="Q9R0N7-1"/>
    <property type="organism name" value="mouse"/>
</dbReference>
<dbReference type="UCSC" id="uc012bin.1">
    <property type="organism name" value="mouse"/>
</dbReference>
<dbReference type="AGR" id="MGI:1859545"/>
<dbReference type="CTD" id="9066"/>
<dbReference type="MGI" id="MGI:1859545">
    <property type="gene designation" value="Syt7"/>
</dbReference>
<dbReference type="VEuPathDB" id="HostDB:ENSMUSG00000024743"/>
<dbReference type="eggNOG" id="KOG1028">
    <property type="taxonomic scope" value="Eukaryota"/>
</dbReference>
<dbReference type="GeneTree" id="ENSGT00940000157180"/>
<dbReference type="HOGENOM" id="CLU_023008_11_3_1"/>
<dbReference type="InParanoid" id="Q9R0N7"/>
<dbReference type="OMA" id="KTPVYKC"/>
<dbReference type="OrthoDB" id="270970at2759"/>
<dbReference type="PhylomeDB" id="Q9R0N7"/>
<dbReference type="TreeFam" id="TF315600"/>
<dbReference type="BioGRID-ORCS" id="54525">
    <property type="hits" value="1 hit in 80 CRISPR screens"/>
</dbReference>
<dbReference type="CD-CODE" id="CE726F99">
    <property type="entry name" value="Postsynaptic density"/>
</dbReference>
<dbReference type="ChiTaRS" id="Syt7">
    <property type="organism name" value="mouse"/>
</dbReference>
<dbReference type="EvolutionaryTrace" id="Q9R0N7"/>
<dbReference type="PRO" id="PR:Q9R0N7"/>
<dbReference type="Proteomes" id="UP000000589">
    <property type="component" value="Chromosome 19"/>
</dbReference>
<dbReference type="RNAct" id="Q9R0N7">
    <property type="molecule type" value="protein"/>
</dbReference>
<dbReference type="Bgee" id="ENSMUSG00000024743">
    <property type="expression patterns" value="Expressed in medial dorsal nucleus of thalamus and 185 other cell types or tissues"/>
</dbReference>
<dbReference type="ExpressionAtlas" id="Q9R0N7">
    <property type="expression patterns" value="baseline and differential"/>
</dbReference>
<dbReference type="GO" id="GO:0043679">
    <property type="term" value="C:axon terminus"/>
    <property type="evidence" value="ECO:0000314"/>
    <property type="project" value="ParkinsonsUK-UCL"/>
</dbReference>
<dbReference type="GO" id="GO:0005829">
    <property type="term" value="C:cytosol"/>
    <property type="evidence" value="ECO:0007669"/>
    <property type="project" value="GOC"/>
</dbReference>
<dbReference type="GO" id="GO:0030425">
    <property type="term" value="C:dendrite"/>
    <property type="evidence" value="ECO:0000314"/>
    <property type="project" value="ParkinsonsUK-UCL"/>
</dbReference>
<dbReference type="GO" id="GO:0032009">
    <property type="term" value="C:early phagosome"/>
    <property type="evidence" value="ECO:0000314"/>
    <property type="project" value="UniProtKB"/>
</dbReference>
<dbReference type="GO" id="GO:0098982">
    <property type="term" value="C:GABA-ergic synapse"/>
    <property type="evidence" value="ECO:0000314"/>
    <property type="project" value="SynGO"/>
</dbReference>
<dbReference type="GO" id="GO:0098978">
    <property type="term" value="C:glutamatergic synapse"/>
    <property type="evidence" value="ECO:0000314"/>
    <property type="project" value="SynGO"/>
</dbReference>
<dbReference type="GO" id="GO:0005765">
    <property type="term" value="C:lysosomal membrane"/>
    <property type="evidence" value="ECO:0007669"/>
    <property type="project" value="UniProtKB-SubCell"/>
</dbReference>
<dbReference type="GO" id="GO:0005764">
    <property type="term" value="C:lysosome"/>
    <property type="evidence" value="ECO:0000314"/>
    <property type="project" value="UniProtKB"/>
</dbReference>
<dbReference type="GO" id="GO:0043025">
    <property type="term" value="C:neuronal cell body"/>
    <property type="evidence" value="ECO:0000314"/>
    <property type="project" value="ParkinsonsUK-UCL"/>
</dbReference>
<dbReference type="GO" id="GO:0005778">
    <property type="term" value="C:peroxisomal membrane"/>
    <property type="evidence" value="ECO:0007669"/>
    <property type="project" value="UniProtKB-SubCell"/>
</dbReference>
<dbReference type="GO" id="GO:0005777">
    <property type="term" value="C:peroxisome"/>
    <property type="evidence" value="ECO:0000314"/>
    <property type="project" value="UniProtKB"/>
</dbReference>
<dbReference type="GO" id="GO:0030670">
    <property type="term" value="C:phagocytic vesicle membrane"/>
    <property type="evidence" value="ECO:0007669"/>
    <property type="project" value="UniProtKB-SubCell"/>
</dbReference>
<dbReference type="GO" id="GO:0042734">
    <property type="term" value="C:presynaptic membrane"/>
    <property type="evidence" value="ECO:0000314"/>
    <property type="project" value="UniProtKB"/>
</dbReference>
<dbReference type="GO" id="GO:0008021">
    <property type="term" value="C:synaptic vesicle"/>
    <property type="evidence" value="ECO:0000315"/>
    <property type="project" value="UniProtKB"/>
</dbReference>
<dbReference type="GO" id="GO:0030672">
    <property type="term" value="C:synaptic vesicle membrane"/>
    <property type="evidence" value="ECO:0007669"/>
    <property type="project" value="UniProtKB-SubCell"/>
</dbReference>
<dbReference type="GO" id="GO:0005544">
    <property type="term" value="F:calcium-dependent phospholipid binding"/>
    <property type="evidence" value="ECO:0000314"/>
    <property type="project" value="UniProtKB"/>
</dbReference>
<dbReference type="GO" id="GO:0005516">
    <property type="term" value="F:calmodulin binding"/>
    <property type="evidence" value="ECO:0000314"/>
    <property type="project" value="UniProtKB"/>
</dbReference>
<dbReference type="GO" id="GO:0046872">
    <property type="term" value="F:metal ion binding"/>
    <property type="evidence" value="ECO:0007669"/>
    <property type="project" value="UniProtKB-KW"/>
</dbReference>
<dbReference type="GO" id="GO:0005546">
    <property type="term" value="F:phosphatidylinositol-4,5-bisphosphate binding"/>
    <property type="evidence" value="ECO:0000314"/>
    <property type="project" value="UniProtKB"/>
</dbReference>
<dbReference type="GO" id="GO:0001786">
    <property type="term" value="F:phosphatidylserine binding"/>
    <property type="evidence" value="ECO:0000314"/>
    <property type="project" value="ParkinsonsUK-UCL"/>
</dbReference>
<dbReference type="GO" id="GO:0000149">
    <property type="term" value="F:SNARE binding"/>
    <property type="evidence" value="ECO:0000314"/>
    <property type="project" value="ParkinsonsUK-UCL"/>
</dbReference>
<dbReference type="GO" id="GO:1990927">
    <property type="term" value="P:calcium ion regulated lysosome exocytosis"/>
    <property type="evidence" value="ECO:0000315"/>
    <property type="project" value="UniProtKB"/>
</dbReference>
<dbReference type="GO" id="GO:0048791">
    <property type="term" value="P:calcium ion-regulated exocytosis of neurotransmitter"/>
    <property type="evidence" value="ECO:0000315"/>
    <property type="project" value="UniProtKB"/>
</dbReference>
<dbReference type="GO" id="GO:0099502">
    <property type="term" value="P:calcium-dependent activation of synaptic vesicle fusion"/>
    <property type="evidence" value="ECO:0000314"/>
    <property type="project" value="SynGO"/>
</dbReference>
<dbReference type="GO" id="GO:0006909">
    <property type="term" value="P:phagocytosis"/>
    <property type="evidence" value="ECO:0000315"/>
    <property type="project" value="UniProtKB"/>
</dbReference>
<dbReference type="GO" id="GO:0090385">
    <property type="term" value="P:phagosome-lysosome fusion"/>
    <property type="evidence" value="ECO:0000315"/>
    <property type="project" value="UniProtKB"/>
</dbReference>
<dbReference type="GO" id="GO:0001778">
    <property type="term" value="P:plasma membrane repair"/>
    <property type="evidence" value="ECO:0000314"/>
    <property type="project" value="MGI"/>
</dbReference>
<dbReference type="GO" id="GO:0046850">
    <property type="term" value="P:regulation of bone remodeling"/>
    <property type="evidence" value="ECO:0000315"/>
    <property type="project" value="UniProtKB"/>
</dbReference>
<dbReference type="GO" id="GO:0017158">
    <property type="term" value="P:regulation of calcium ion-dependent exocytosis"/>
    <property type="evidence" value="ECO:0000315"/>
    <property type="project" value="ParkinsonsUK-UCL"/>
</dbReference>
<dbReference type="GO" id="GO:0014059">
    <property type="term" value="P:regulation of dopamine secretion"/>
    <property type="evidence" value="ECO:0000315"/>
    <property type="project" value="ParkinsonsUK-UCL"/>
</dbReference>
<dbReference type="GO" id="GO:0070092">
    <property type="term" value="P:regulation of glucagon secretion"/>
    <property type="evidence" value="ECO:0000315"/>
    <property type="project" value="UniProtKB"/>
</dbReference>
<dbReference type="GO" id="GO:0050796">
    <property type="term" value="P:regulation of insulin secretion"/>
    <property type="evidence" value="ECO:0000315"/>
    <property type="project" value="UniProtKB"/>
</dbReference>
<dbReference type="GO" id="GO:0050764">
    <property type="term" value="P:regulation of phagocytosis"/>
    <property type="evidence" value="ECO:0000315"/>
    <property type="project" value="UniProtKB"/>
</dbReference>
<dbReference type="GO" id="GO:1990926">
    <property type="term" value="P:short-term synaptic potentiation"/>
    <property type="evidence" value="ECO:0000314"/>
    <property type="project" value="UniProtKB"/>
</dbReference>
<dbReference type="GO" id="GO:0036465">
    <property type="term" value="P:synaptic vesicle recycling"/>
    <property type="evidence" value="ECO:0000315"/>
    <property type="project" value="UniProtKB"/>
</dbReference>
<dbReference type="GO" id="GO:0090119">
    <property type="term" value="P:vesicle-mediated cholesterol transport"/>
    <property type="evidence" value="ECO:0000314"/>
    <property type="project" value="UniProtKB"/>
</dbReference>
<dbReference type="CDD" id="cd08386">
    <property type="entry name" value="C2A_Synaptotagmin-7"/>
    <property type="match status" value="1"/>
</dbReference>
<dbReference type="CDD" id="cd08405">
    <property type="entry name" value="C2B_Synaptotagmin-7"/>
    <property type="match status" value="1"/>
</dbReference>
<dbReference type="FunFam" id="2.60.40.150:FF:000027">
    <property type="entry name" value="Synaptotagmin 7"/>
    <property type="match status" value="1"/>
</dbReference>
<dbReference type="FunFam" id="2.60.40.150:FF:000028">
    <property type="entry name" value="Synaptotagmin 7"/>
    <property type="match status" value="1"/>
</dbReference>
<dbReference type="Gene3D" id="2.60.40.150">
    <property type="entry name" value="C2 domain"/>
    <property type="match status" value="2"/>
</dbReference>
<dbReference type="InterPro" id="IPR000008">
    <property type="entry name" value="C2_dom"/>
</dbReference>
<dbReference type="InterPro" id="IPR035892">
    <property type="entry name" value="C2_domain_sf"/>
</dbReference>
<dbReference type="InterPro" id="IPR037732">
    <property type="entry name" value="C2A_Synaptotagmin-7"/>
</dbReference>
<dbReference type="InterPro" id="IPR037741">
    <property type="entry name" value="C2B_Synaptotagmin-7"/>
</dbReference>
<dbReference type="InterPro" id="IPR001565">
    <property type="entry name" value="Synaptotagmin"/>
</dbReference>
<dbReference type="PANTHER" id="PTHR10024">
    <property type="entry name" value="SYNAPTOTAGMIN"/>
    <property type="match status" value="1"/>
</dbReference>
<dbReference type="PANTHER" id="PTHR10024:SF344">
    <property type="entry name" value="SYNAPTOTAGMIN-7"/>
    <property type="match status" value="1"/>
</dbReference>
<dbReference type="Pfam" id="PF00168">
    <property type="entry name" value="C2"/>
    <property type="match status" value="2"/>
</dbReference>
<dbReference type="PRINTS" id="PR00360">
    <property type="entry name" value="C2DOMAIN"/>
</dbReference>
<dbReference type="PRINTS" id="PR00399">
    <property type="entry name" value="SYNAPTOTAGMN"/>
</dbReference>
<dbReference type="SMART" id="SM00239">
    <property type="entry name" value="C2"/>
    <property type="match status" value="2"/>
</dbReference>
<dbReference type="SUPFAM" id="SSF49562">
    <property type="entry name" value="C2 domain (Calcium/lipid-binding domain, CaLB)"/>
    <property type="match status" value="2"/>
</dbReference>
<dbReference type="PROSITE" id="PS50004">
    <property type="entry name" value="C2"/>
    <property type="match status" value="2"/>
</dbReference>
<organism>
    <name type="scientific">Mus musculus</name>
    <name type="common">Mouse</name>
    <dbReference type="NCBI Taxonomy" id="10090"/>
    <lineage>
        <taxon>Eukaryota</taxon>
        <taxon>Metazoa</taxon>
        <taxon>Chordata</taxon>
        <taxon>Craniata</taxon>
        <taxon>Vertebrata</taxon>
        <taxon>Euteleostomi</taxon>
        <taxon>Mammalia</taxon>
        <taxon>Eutheria</taxon>
        <taxon>Euarchontoglires</taxon>
        <taxon>Glires</taxon>
        <taxon>Rodentia</taxon>
        <taxon>Myomorpha</taxon>
        <taxon>Muroidea</taxon>
        <taxon>Muridae</taxon>
        <taxon>Murinae</taxon>
        <taxon>Mus</taxon>
        <taxon>Mus</taxon>
    </lineage>
</organism>
<evidence type="ECO:0000250" key="1">
    <source>
        <dbReference type="UniProtKB" id="O43581"/>
    </source>
</evidence>
<evidence type="ECO:0000250" key="2">
    <source>
        <dbReference type="UniProtKB" id="Q62747"/>
    </source>
</evidence>
<evidence type="ECO:0000255" key="3"/>
<evidence type="ECO:0000255" key="4">
    <source>
        <dbReference type="PROSITE-ProRule" id="PRU00041"/>
    </source>
</evidence>
<evidence type="ECO:0000256" key="5">
    <source>
        <dbReference type="SAM" id="MobiDB-lite"/>
    </source>
</evidence>
<evidence type="ECO:0000269" key="6">
    <source>
    </source>
</evidence>
<evidence type="ECO:0000269" key="7">
    <source>
    </source>
</evidence>
<evidence type="ECO:0000269" key="8">
    <source>
    </source>
</evidence>
<evidence type="ECO:0000269" key="9">
    <source>
    </source>
</evidence>
<evidence type="ECO:0000269" key="10">
    <source>
    </source>
</evidence>
<evidence type="ECO:0000269" key="11">
    <source>
    </source>
</evidence>
<evidence type="ECO:0000269" key="12">
    <source>
    </source>
</evidence>
<evidence type="ECO:0000269" key="13">
    <source>
    </source>
</evidence>
<evidence type="ECO:0000269" key="14">
    <source>
    </source>
</evidence>
<evidence type="ECO:0000269" key="15">
    <source>
    </source>
</evidence>
<evidence type="ECO:0000269" key="16">
    <source>
    </source>
</evidence>
<evidence type="ECO:0000269" key="17">
    <source>
    </source>
</evidence>
<evidence type="ECO:0000269" key="18">
    <source>
    </source>
</evidence>
<evidence type="ECO:0000269" key="19">
    <source>
    </source>
</evidence>
<evidence type="ECO:0000269" key="20">
    <source>
    </source>
</evidence>
<evidence type="ECO:0000303" key="21">
    <source>
    </source>
</evidence>
<evidence type="ECO:0000303" key="22">
    <source>
    </source>
</evidence>
<evidence type="ECO:0000305" key="23"/>
<evidence type="ECO:0000305" key="24">
    <source>
    </source>
</evidence>
<evidence type="ECO:0000312" key="25">
    <source>
        <dbReference type="MGI" id="MGI:1859545"/>
    </source>
</evidence>
<evidence type="ECO:0007744" key="26">
    <source>
        <dbReference type="PDB" id="3N5A"/>
    </source>
</evidence>
<evidence type="ECO:0007744" key="27">
    <source>
    </source>
</evidence>
<evidence type="ECO:0007744" key="28">
    <source>
    </source>
</evidence>
<evidence type="ECO:0007829" key="29">
    <source>
        <dbReference type="PDB" id="3N5A"/>
    </source>
</evidence>
<reference key="1">
    <citation type="journal article" date="1999" name="J. Biol. Chem.">
        <title>Conserved N-terminal cysteine motif is essential for homo- and heterodimer formation of synaptotagmins III, V, VI, and X.</title>
        <authorList>
            <person name="Fukuda M."/>
            <person name="Kanno E."/>
            <person name="Mikoshiba K."/>
        </authorList>
    </citation>
    <scope>NUCLEOTIDE SEQUENCE [MRNA] (ISOFORM 1)</scope>
    <source>
        <strain>ICR</strain>
        <tissue>Cerebellum</tissue>
    </source>
</reference>
<reference key="2">
    <citation type="journal article" date="2002" name="Biochem. J.">
        <title>Alternative splicing isoforms of synaptotagmin VII in the mouse, rat and human.</title>
        <authorList>
            <person name="Fukuda M."/>
            <person name="Ogata Y."/>
            <person name="Saegusa C."/>
            <person name="Kanno E."/>
            <person name="Mikoshiba K."/>
        </authorList>
    </citation>
    <scope>NUCLEOTIDE SEQUENCE [MRNA] (ISOFORMS 2 AND 3)</scope>
    <source>
        <strain>BALB/cJ</strain>
        <tissue>Brain</tissue>
    </source>
</reference>
<reference key="3">
    <citation type="journal article" date="2009" name="PLoS Biol.">
        <title>Lineage-specific biology revealed by a finished genome assembly of the mouse.</title>
        <authorList>
            <person name="Church D.M."/>
            <person name="Goodstadt L."/>
            <person name="Hillier L.W."/>
            <person name="Zody M.C."/>
            <person name="Goldstein S."/>
            <person name="She X."/>
            <person name="Bult C.J."/>
            <person name="Agarwala R."/>
            <person name="Cherry J.L."/>
            <person name="DiCuccio M."/>
            <person name="Hlavina W."/>
            <person name="Kapustin Y."/>
            <person name="Meric P."/>
            <person name="Maglott D."/>
            <person name="Birtle Z."/>
            <person name="Marques A.C."/>
            <person name="Graves T."/>
            <person name="Zhou S."/>
            <person name="Teague B."/>
            <person name="Potamousis K."/>
            <person name="Churas C."/>
            <person name="Place M."/>
            <person name="Herschleb J."/>
            <person name="Runnheim R."/>
            <person name="Forrest D."/>
            <person name="Amos-Landgraf J."/>
            <person name="Schwartz D.C."/>
            <person name="Cheng Z."/>
            <person name="Lindblad-Toh K."/>
            <person name="Eichler E.E."/>
            <person name="Ponting C.P."/>
        </authorList>
    </citation>
    <scope>NUCLEOTIDE SEQUENCE [LARGE SCALE GENOMIC DNA]</scope>
    <source>
        <strain>C57BL/6J</strain>
    </source>
</reference>
<reference key="4">
    <citation type="journal article" date="2004" name="Genome Res.">
        <title>The status, quality, and expansion of the NIH full-length cDNA project: the Mammalian Gene Collection (MGC).</title>
        <authorList>
            <consortium name="The MGC Project Team"/>
        </authorList>
    </citation>
    <scope>NUCLEOTIDE SEQUENCE [LARGE SCALE MRNA] (ISOFORM 1)</scope>
</reference>
<reference key="5">
    <citation type="journal article" date="2000" name="J. Biol. Chem.">
        <title>Distinct self-oligomerization activities of synaptotagmin family. Unique calcium-dependent oligomerization properties of synaptotagmin VII.</title>
        <authorList>
            <person name="Fukuda M."/>
            <person name="Mikoshiba K."/>
        </authorList>
    </citation>
    <scope>SUBUNIT</scope>
</reference>
<reference key="6">
    <citation type="journal article" date="2001" name="Neuron">
        <title>Synaptotagmin VII as a plasma membrane Ca(2+) sensor in exocytosis.</title>
        <authorList>
            <person name="Sugita S."/>
            <person name="Han W."/>
            <person name="Butz S."/>
            <person name="Liu X."/>
            <person name="Fernandez-Chacon R."/>
            <person name="Lao Y."/>
            <person name="Sudhof T.C."/>
        </authorList>
    </citation>
    <scope>SUBCELLULAR LOCATION</scope>
</reference>
<reference key="7">
    <citation type="journal article" date="2003" name="J. Cell Biol.">
        <title>Impaired membrane resealing and autoimmune myositis in synaptotagmin VII-deficient mice.</title>
        <authorList>
            <person name="Chakrabarti S."/>
            <person name="Kobayashi K.S."/>
            <person name="Flavell R.A."/>
            <person name="Marks C.B."/>
            <person name="Miyake K."/>
            <person name="Liston D.R."/>
            <person name="Fowler K.T."/>
            <person name="Gorelick F.S."/>
            <person name="Andrews N.W."/>
        </authorList>
    </citation>
    <scope>DISRUPTION PHENOTYPE</scope>
</reference>
<reference key="8">
    <citation type="journal article" date="2006" name="J. Cell Biol.">
        <title>Ca2+ and synaptotagmin VII-dependent delivery of lysosomal membrane to nascent phagosomes.</title>
        <authorList>
            <person name="Czibener C."/>
            <person name="Sherer N.M."/>
            <person name="Becker S.M."/>
            <person name="Pypaert M."/>
            <person name="Hui E."/>
            <person name="Chapman E.R."/>
            <person name="Mothes W."/>
            <person name="Andrews N.W."/>
        </authorList>
    </citation>
    <scope>FUNCTION</scope>
    <scope>SUBCELLULAR LOCATION</scope>
    <scope>MUTAGENESIS OF 225-ASP--ASP-227 AND 357-ASP--ASP-359</scope>
</reference>
<reference key="9">
    <citation type="journal article" date="2007" name="Biochem. Biophys. Res. Commun.">
        <title>Regulation of insulin secretion and GLUT4 trafficking by the calcium sensor synaptotagmin VII.</title>
        <authorList>
            <person name="Li Y."/>
            <person name="Wang P."/>
            <person name="Xu J."/>
            <person name="Gorelick F."/>
            <person name="Yamazaki H."/>
            <person name="Andrews N."/>
            <person name="Desir G.V."/>
        </authorList>
    </citation>
    <scope>DISRUPTION PHENOTYPE</scope>
</reference>
<reference key="10">
    <citation type="journal article" date="2008" name="Dev. Cell">
        <title>Synaptotagmin VII regulates bone remodeling by modulating osteoclast and osteoblast secretion.</title>
        <authorList>
            <person name="Zhao H."/>
            <person name="Ito Y."/>
            <person name="Chappel J."/>
            <person name="Andrews N.W."/>
            <person name="Teitelbaum S.L."/>
            <person name="Ross F.P."/>
        </authorList>
    </citation>
    <scope>FUNCTION</scope>
</reference>
<reference key="11">
    <citation type="journal article" date="2008" name="Proc. Natl. Acad. Sci. U.S.A.">
        <title>Impaired insulin secretion and glucose intolerance in synaptotagmin-7 null mutant mice.</title>
        <authorList>
            <person name="Gustavsson N."/>
            <person name="Lao Y."/>
            <person name="Maximov A."/>
            <person name="Chuang J.C."/>
            <person name="Kostromina E."/>
            <person name="Repa J.J."/>
            <person name="Li C."/>
            <person name="Radda G.K."/>
            <person name="Suedhof T.C."/>
            <person name="Han W."/>
        </authorList>
    </citation>
    <scope>FUNCTION</scope>
    <scope>DISRUPTION PHENOTYPE</scope>
    <scope>TISSUE SPECIFICITY</scope>
</reference>
<reference key="12">
    <citation type="journal article" date="2009" name="J. Physiol. (Lond.)">
        <title>Synaptotagmin-7 is a principal Ca2+ sensor for Ca2+ -induced glucagon exocytosis in pancreas.</title>
        <authorList>
            <person name="Gustavsson N."/>
            <person name="Wei S.H."/>
            <person name="Hoang D.N."/>
            <person name="Lao Y."/>
            <person name="Zhang Q."/>
            <person name="Radda G.K."/>
            <person name="Rorsman P."/>
            <person name="Suedhof T.C."/>
            <person name="Han W."/>
        </authorList>
    </citation>
    <scope>FUNCTION</scope>
    <scope>DISRUPTION PHENOTYPE</scope>
    <scope>TISSUE SPECIFICITY</scope>
</reference>
<reference key="13">
    <citation type="journal article" date="2010" name="Cell">
        <title>A tissue-specific atlas of mouse protein phosphorylation and expression.</title>
        <authorList>
            <person name="Huttlin E.L."/>
            <person name="Jedrychowski M.P."/>
            <person name="Elias J.E."/>
            <person name="Goswami T."/>
            <person name="Rad R."/>
            <person name="Beausoleil S.A."/>
            <person name="Villen J."/>
            <person name="Haas W."/>
            <person name="Sowa M.E."/>
            <person name="Gygi S.P."/>
        </authorList>
    </citation>
    <scope>PHOSPHORYLATION [LARGE SCALE ANALYSIS] AT SER-52; THR-58; SER-61 AND SER-122</scope>
    <scope>IDENTIFICATION BY MASS SPECTROMETRY [LARGE SCALE ANALYSIS]</scope>
    <source>
        <tissue>Brain</tissue>
    </source>
</reference>
<reference key="14">
    <citation type="journal article" date="2010" name="J. Cell Biol.">
        <title>Palmitoylation-dependent association with CD63 targets the Ca2+ sensor synaptotagmin VII to lysosomes.</title>
        <authorList>
            <person name="Flannery A.R."/>
            <person name="Czibener C."/>
            <person name="Andrews N.W."/>
        </authorList>
    </citation>
    <scope>FUNCTION</scope>
    <scope>PALMITOYLATION</scope>
    <scope>SUBCELLULAR LOCATION</scope>
    <scope>INTERACTION WITH CD63</scope>
    <scope>MUTAGENESIS OF 35-CYS--CYS-43</scope>
</reference>
<reference key="15">
    <citation type="journal article" date="2010" name="Proc. Natl. Acad. Sci. U.S.A.">
        <title>Push-and-pull regulation of the fusion pore by synaptotagmin-7.</title>
        <authorList>
            <person name="Segovia M."/>
            <person name="Ales E."/>
            <person name="Montes M.A."/>
            <person name="Bonifas I."/>
            <person name="Jemal I."/>
            <person name="Lindau M."/>
            <person name="Maximov A."/>
            <person name="Suedhof T.C."/>
            <person name="Alvarez de Toledo G."/>
        </authorList>
    </citation>
    <scope>FUNCTION</scope>
</reference>
<reference key="16">
    <citation type="journal article" date="2014" name="Elife">
        <title>Synaptotagmin 7 functions as a Ca2+-sensor for synaptic vesicle replenishment.</title>
        <authorList>
            <person name="Liu H."/>
            <person name="Bai H."/>
            <person name="Hui E."/>
            <person name="Yang L."/>
            <person name="Evans C.S."/>
            <person name="Wang Z."/>
            <person name="Kwon S.E."/>
            <person name="Chapman E.R."/>
        </authorList>
    </citation>
    <scope>FUNCTION</scope>
    <scope>SUBCELLULAR LOCATION</scope>
    <scope>DISRUPTION PHENOTYPE</scope>
    <scope>INTERACTION WITH CALMODULIN</scope>
    <scope>MUTAGENESIS OF 225-ASP--ASP-227 AND 357-ASP--ASP-359</scope>
</reference>
<reference key="17">
    <citation type="journal article" date="2014" name="Mol. Cell. Proteomics">
        <title>Immunoaffinity enrichment and mass spectrometry analysis of protein methylation.</title>
        <authorList>
            <person name="Guo A."/>
            <person name="Gu H."/>
            <person name="Zhou J."/>
            <person name="Mulhern D."/>
            <person name="Wang Y."/>
            <person name="Lee K.A."/>
            <person name="Yang V."/>
            <person name="Aguiar M."/>
            <person name="Kornhauser J."/>
            <person name="Jia X."/>
            <person name="Ren J."/>
            <person name="Beausoleil S.A."/>
            <person name="Silva J.C."/>
            <person name="Vemulapalli V."/>
            <person name="Bedford M.T."/>
            <person name="Comb M.J."/>
        </authorList>
    </citation>
    <scope>METHYLATION [LARGE SCALE ANALYSIS] AT ARG-169 AND ARG-171 (ISOFORM 4)</scope>
    <scope>IDENTIFICATION BY MASS SPECTROMETRY [LARGE SCALE ANALYSIS]</scope>
    <source>
        <tissue>Brain</tissue>
    </source>
</reference>
<reference key="18">
    <citation type="journal article" date="2015" name="Cell">
        <title>Cholesterol transport through lysosome-peroxisome membrane contacts.</title>
        <authorList>
            <person name="Chu B.B."/>
            <person name="Liao Y.C."/>
            <person name="Qi W."/>
            <person name="Xie C."/>
            <person name="Du X."/>
            <person name="Wang J."/>
            <person name="Yang H."/>
            <person name="Miao H.H."/>
            <person name="Li B.L."/>
            <person name="Song B.L."/>
        </authorList>
    </citation>
    <scope>FUNCTION</scope>
    <scope>SUBCELLULAR LOCATION</scope>
    <scope>IDENTIFICATION BY MASS SPECTROMETRY</scope>
</reference>
<reference key="19">
    <citation type="journal article" date="2016" name="Nature">
        <title>The calcium sensor synaptotagmin 7 is required for synaptic facilitation.</title>
        <authorList>
            <person name="Jackman S.L."/>
            <person name="Turecek J."/>
            <person name="Belinsky J.E."/>
            <person name="Regehr W.G."/>
        </authorList>
    </citation>
    <scope>FUNCTION</scope>
    <scope>DISRUPTION PHENOTYPE</scope>
    <scope>MUTAGENESIS OF 225-ASP--ASP-232</scope>
</reference>
<reference key="20">
    <citation type="journal article" date="2018" name="Nat. Commun.">
        <title>Presenilin-mediated cleavage of APP regulates synaptotagmin-7 and presynaptic plasticity.</title>
        <authorList>
            <person name="Barthet G."/>
            <person name="Jorda-Siquier T."/>
            <person name="Rumi-Masante J."/>
            <person name="Bernadou F."/>
            <person name="Mueller U."/>
            <person name="Mulle C."/>
        </authorList>
    </citation>
    <scope>INTERACTION WITH APP</scope>
</reference>
<reference evidence="26" key="21">
    <citation type="journal article" date="2010" name="PLoS ONE">
        <title>Structural and mutational analysis of functional differentiation between synaptotagmins-1 and -7.</title>
        <authorList>
            <person name="Xue M."/>
            <person name="Craig T.K."/>
            <person name="Shin O.H."/>
            <person name="Li L."/>
            <person name="Brautigam C.A."/>
            <person name="Tomchick D.R."/>
            <person name="Sudhof T.C."/>
            <person name="Rosenmund C."/>
            <person name="Rizo J."/>
        </authorList>
    </citation>
    <scope>X-RAY CRYSTALLOGRAPHY (1.44 ANGSTROMS) OF 266-403 IN COMPLEX WITH CALCIUM</scope>
    <scope>COFACTOR</scope>
</reference>
<protein>
    <recommendedName>
        <fullName evidence="23">Synaptotagmin-7</fullName>
    </recommendedName>
    <alternativeName>
        <fullName evidence="21">Synaptotagmin VII</fullName>
        <shortName evidence="21">SytVII</shortName>
    </alternativeName>
</protein>
<feature type="chain" id="PRO_0000183958" description="Synaptotagmin-7">
    <location>
        <begin position="1"/>
        <end position="403"/>
    </location>
</feature>
<feature type="topological domain" description="Vesicular" evidence="3">
    <location>
        <begin position="1"/>
        <end position="16"/>
    </location>
</feature>
<feature type="transmembrane region" description="Helical" evidence="3">
    <location>
        <begin position="17"/>
        <end position="37"/>
    </location>
</feature>
<feature type="topological domain" description="Cytoplasmic" evidence="3">
    <location>
        <begin position="38"/>
        <end position="403"/>
    </location>
</feature>
<feature type="domain" description="C2 1" evidence="4">
    <location>
        <begin position="135"/>
        <end position="255"/>
    </location>
</feature>
<feature type="domain" description="C2 2" evidence="4">
    <location>
        <begin position="266"/>
        <end position="399"/>
    </location>
</feature>
<feature type="region of interest" description="Disordered" evidence="5">
    <location>
        <begin position="53"/>
        <end position="103"/>
    </location>
</feature>
<feature type="compositionally biased region" description="Basic and acidic residues" evidence="5">
    <location>
        <begin position="90"/>
        <end position="100"/>
    </location>
</feature>
<feature type="binding site" evidence="4">
    <location>
        <position position="166"/>
    </location>
    <ligand>
        <name>Ca(2+)</name>
        <dbReference type="ChEBI" id="CHEBI:29108"/>
        <label>1</label>
    </ligand>
</feature>
<feature type="binding site" evidence="4">
    <location>
        <position position="166"/>
    </location>
    <ligand>
        <name>Ca(2+)</name>
        <dbReference type="ChEBI" id="CHEBI:29108"/>
        <label>2</label>
    </ligand>
</feature>
<feature type="binding site" evidence="4">
    <location>
        <position position="172"/>
    </location>
    <ligand>
        <name>Ca(2+)</name>
        <dbReference type="ChEBI" id="CHEBI:29108"/>
        <label>1</label>
    </ligand>
</feature>
<feature type="binding site" evidence="4 24">
    <location>
        <position position="225"/>
    </location>
    <ligand>
        <name>Ca(2+)</name>
        <dbReference type="ChEBI" id="CHEBI:29108"/>
        <label>1</label>
    </ligand>
</feature>
<feature type="binding site" evidence="4 24">
    <location>
        <position position="225"/>
    </location>
    <ligand>
        <name>Ca(2+)</name>
        <dbReference type="ChEBI" id="CHEBI:29108"/>
        <label>2</label>
    </ligand>
</feature>
<feature type="binding site" evidence="4 24">
    <location>
        <position position="227"/>
    </location>
    <ligand>
        <name>Ca(2+)</name>
        <dbReference type="ChEBI" id="CHEBI:29108"/>
        <label>1</label>
    </ligand>
</feature>
<feature type="binding site" evidence="4 24">
    <location>
        <position position="227"/>
    </location>
    <ligand>
        <name>Ca(2+)</name>
        <dbReference type="ChEBI" id="CHEBI:29108"/>
        <label>2</label>
    </ligand>
</feature>
<feature type="binding site" evidence="4 24">
    <location>
        <position position="227"/>
    </location>
    <ligand>
        <name>Ca(2+)</name>
        <dbReference type="ChEBI" id="CHEBI:29108"/>
        <label>3</label>
    </ligand>
</feature>
<feature type="binding site" evidence="4">
    <location>
        <position position="230"/>
    </location>
    <ligand>
        <name>Ca(2+)</name>
        <dbReference type="ChEBI" id="CHEBI:29108"/>
        <label>3</label>
    </ligand>
</feature>
<feature type="binding site" evidence="4 24">
    <location>
        <position position="233"/>
    </location>
    <ligand>
        <name>Ca(2+)</name>
        <dbReference type="ChEBI" id="CHEBI:29108"/>
        <label>2</label>
    </ligand>
</feature>
<feature type="binding site" evidence="4 24">
    <location>
        <position position="233"/>
    </location>
    <ligand>
        <name>Ca(2+)</name>
        <dbReference type="ChEBI" id="CHEBI:29108"/>
        <label>3</label>
    </ligand>
</feature>
<feature type="binding site" evidence="4 14 26">
    <location>
        <position position="297"/>
    </location>
    <ligand>
        <name>Ca(2+)</name>
        <dbReference type="ChEBI" id="CHEBI:29108"/>
        <label>4</label>
    </ligand>
</feature>
<feature type="binding site" evidence="4 14 26">
    <location>
        <position position="297"/>
    </location>
    <ligand>
        <name>Ca(2+)</name>
        <dbReference type="ChEBI" id="CHEBI:29108"/>
        <label>5</label>
    </ligand>
</feature>
<feature type="binding site" evidence="4 14 26">
    <location>
        <position position="303"/>
    </location>
    <ligand>
        <name>Ca(2+)</name>
        <dbReference type="ChEBI" id="CHEBI:29108"/>
        <label>4</label>
    </ligand>
</feature>
<feature type="binding site" evidence="4 14 26">
    <location>
        <position position="357"/>
    </location>
    <ligand>
        <name>Ca(2+)</name>
        <dbReference type="ChEBI" id="CHEBI:29108"/>
        <label>4</label>
    </ligand>
</feature>
<feature type="binding site" evidence="4 14 26">
    <location>
        <position position="357"/>
    </location>
    <ligand>
        <name>Ca(2+)</name>
        <dbReference type="ChEBI" id="CHEBI:29108"/>
        <label>5</label>
    </ligand>
</feature>
<feature type="binding site" evidence="4 14 26">
    <location>
        <position position="359"/>
    </location>
    <ligand>
        <name>Ca(2+)</name>
        <dbReference type="ChEBI" id="CHEBI:29108"/>
        <label>4</label>
    </ligand>
</feature>
<feature type="binding site" evidence="4 14 26">
    <location>
        <position position="359"/>
    </location>
    <ligand>
        <name>Ca(2+)</name>
        <dbReference type="ChEBI" id="CHEBI:29108"/>
        <label>5</label>
    </ligand>
</feature>
<feature type="binding site" evidence="4 14 26">
    <location>
        <position position="359"/>
    </location>
    <ligand>
        <name>Ca(2+)</name>
        <dbReference type="ChEBI" id="CHEBI:29108"/>
        <label>6</label>
    </ligand>
</feature>
<feature type="binding site" evidence="4 14 26">
    <location>
        <position position="362"/>
    </location>
    <ligand>
        <name>Ca(2+)</name>
        <dbReference type="ChEBI" id="CHEBI:29108"/>
        <label>6</label>
    </ligand>
</feature>
<feature type="binding site" evidence="14 26">
    <location>
        <position position="365"/>
    </location>
    <ligand>
        <name>Ca(2+)</name>
        <dbReference type="ChEBI" id="CHEBI:29108"/>
        <label>4</label>
    </ligand>
</feature>
<feature type="binding site" evidence="4 14 26">
    <location>
        <position position="365"/>
    </location>
    <ligand>
        <name>Ca(2+)</name>
        <dbReference type="ChEBI" id="CHEBI:29108"/>
        <label>6</label>
    </ligand>
</feature>
<feature type="modified residue" description="Phosphoserine" evidence="27">
    <location>
        <position position="52"/>
    </location>
</feature>
<feature type="modified residue" description="Phosphothreonine" evidence="27">
    <location>
        <position position="58"/>
    </location>
</feature>
<feature type="modified residue" description="Phosphoserine" evidence="27">
    <location>
        <position position="61"/>
    </location>
</feature>
<feature type="modified residue" description="Phosphoserine" evidence="2">
    <location>
        <position position="119"/>
    </location>
</feature>
<feature type="modified residue" description="Phosphoserine" evidence="27">
    <location>
        <position position="122"/>
    </location>
</feature>
<feature type="splice variant" id="VSP_058235" description="In isoform 3.">
    <original>I</original>
    <variation>INDLDRDFWNNNESTVQQKWSSYPPKEFILNISPYAPYGDPRLSL</variation>
    <location>
        <position position="71"/>
    </location>
</feature>
<feature type="splice variant" id="VSP_058236" description="In isoform 2.">
    <original>K</original>
    <variation>NFEDSTLSTATTLESIPSSAGEPKCQRPRTLMRQQSLQQPLSQNQRGRQPSQPTTSWDHVVGQIRNRGLDMKSFLEGRMVVLSLVLGLSEQDDFANIPDLQNPGTQQNQNAQGDKR</variation>
    <location>
        <position position="72"/>
    </location>
</feature>
<feature type="splice variant" id="VSP_058237" description="In isoform 4.">
    <original>K</original>
    <variation>NFEDSTLSTATTLESIPSSAGEPKCQRPRTLMRQQSLQQPLSQNQQGRQPSQPTTSQSLGQLQAHAASAPGSNPRAYGRGQARQGTSAGSKYRAAGGRSRSNPGSWDHVVGQIRNRGLDMKSFLEGRMVVLSLVLGLSEQDDFANIPDLQNPGTQQNQNAQGDKR</variation>
    <location>
        <position position="72"/>
    </location>
</feature>
<feature type="mutagenesis site" description="Abolishes palmitoylation. Impaired phagocytosis and localization to lysosomes." evidence="16">
    <original>CGLCHWC</original>
    <variation>SGLSHWS</variation>
    <location>
        <begin position="35"/>
        <end position="41"/>
    </location>
</feature>
<feature type="mutagenesis site" description="In C2A*; loss of function due to abolished Ca(2+)-binding to the first C2 domain. Impaired ability to mediate synaptic facilitation." evidence="19">
    <original>DYDRFSRND</original>
    <variation>AYARFSRNA</variation>
    <location>
        <begin position="225"/>
        <end position="233"/>
    </location>
</feature>
<feature type="mutagenesis site" description="Loss of Ca(2+)-binding in the first C2 domain. Impaired delivery of lysosomal membrane to nascent phagosomes; when associated with 357-N--N-359. Impaired synaptic vesicle replenishment; when associated with 357-N--N-359." evidence="10 17">
    <original>DYD</original>
    <variation>NYN</variation>
    <location>
        <begin position="225"/>
        <end position="227"/>
    </location>
</feature>
<feature type="mutagenesis site" description="Loss of Ca(2+)-binding in the second C2 domain. Impaired delivery of lysosomal membrane to nascent phagosomes; when associated with 225-N--N-227. Impaired synaptic vesicle replenishment; when associated with 225-N--N-227." evidence="10 17">
    <original>DKD</original>
    <variation>NKN</variation>
    <location>
        <begin position="357"/>
        <end position="359"/>
    </location>
</feature>
<feature type="strand" evidence="29">
    <location>
        <begin position="269"/>
        <end position="277"/>
    </location>
</feature>
<feature type="turn" evidence="29">
    <location>
        <begin position="278"/>
        <end position="281"/>
    </location>
</feature>
<feature type="strand" evidence="29">
    <location>
        <begin position="282"/>
        <end position="292"/>
    </location>
</feature>
<feature type="turn" evidence="29">
    <location>
        <begin position="298"/>
        <end position="300"/>
    </location>
</feature>
<feature type="strand" evidence="29">
    <location>
        <begin position="304"/>
        <end position="312"/>
    </location>
</feature>
<feature type="strand" evidence="29">
    <location>
        <begin position="315"/>
        <end position="321"/>
    </location>
</feature>
<feature type="strand" evidence="29">
    <location>
        <begin position="332"/>
        <end position="340"/>
    </location>
</feature>
<feature type="helix" evidence="29">
    <location>
        <begin position="343"/>
        <end position="348"/>
    </location>
</feature>
<feature type="strand" evidence="29">
    <location>
        <begin position="349"/>
        <end position="357"/>
    </location>
</feature>
<feature type="strand" evidence="29">
    <location>
        <begin position="360"/>
        <end position="362"/>
    </location>
</feature>
<feature type="strand" evidence="29">
    <location>
        <begin position="365"/>
        <end position="376"/>
    </location>
</feature>
<feature type="helix" evidence="29">
    <location>
        <begin position="378"/>
        <end position="389"/>
    </location>
</feature>
<feature type="strand" evidence="29">
    <location>
        <begin position="395"/>
        <end position="400"/>
    </location>
</feature>
<feature type="modified residue" description="Asymmetric dimethylarginine" evidence="28">
    <location sequence="Q9R0N7-4">
        <position position="169"/>
    </location>
</feature>
<feature type="modified residue" description="Asymmetric dimethylarginine" evidence="28">
    <location sequence="Q9R0N7-4">
        <position position="171"/>
    </location>
</feature>